<accession>A8F2L0</accession>
<protein>
    <recommendedName>
        <fullName evidence="1">Ribonuclease H</fullName>
        <shortName evidence="1">RNase H</shortName>
        <ecNumber evidence="1">3.1.26.4</ecNumber>
    </recommendedName>
</protein>
<sequence length="152" mass="17017">MGSKVVIYTDGACAGNPGPGGWGALLQFNDTSKEVFGYELDTTNNRMEITAALEALRMLKKSCNIEIYTDSKYLQQGITAWIHNWIKNNWCKSNNEPVKNADLWQKLYAELSKHTIIWKWVKGHANNSGNIAADKLAVQGRETAIEILKCRG</sequence>
<dbReference type="EC" id="3.1.26.4" evidence="1"/>
<dbReference type="EMBL" id="CP000683">
    <property type="protein sequence ID" value="ABV85146.1"/>
    <property type="status" value="ALT_INIT"/>
    <property type="molecule type" value="Genomic_DNA"/>
</dbReference>
<dbReference type="RefSeq" id="WP_012153110.1">
    <property type="nucleotide sequence ID" value="NC_009900.1"/>
</dbReference>
<dbReference type="SMR" id="A8F2L0"/>
<dbReference type="KEGG" id="rms:RMA_1145"/>
<dbReference type="HOGENOM" id="CLU_030894_6_0_5"/>
<dbReference type="Proteomes" id="UP000001311">
    <property type="component" value="Chromosome"/>
</dbReference>
<dbReference type="GO" id="GO:0005737">
    <property type="term" value="C:cytoplasm"/>
    <property type="evidence" value="ECO:0007669"/>
    <property type="project" value="UniProtKB-SubCell"/>
</dbReference>
<dbReference type="GO" id="GO:0000287">
    <property type="term" value="F:magnesium ion binding"/>
    <property type="evidence" value="ECO:0007669"/>
    <property type="project" value="UniProtKB-UniRule"/>
</dbReference>
<dbReference type="GO" id="GO:0003676">
    <property type="term" value="F:nucleic acid binding"/>
    <property type="evidence" value="ECO:0007669"/>
    <property type="project" value="InterPro"/>
</dbReference>
<dbReference type="GO" id="GO:0004523">
    <property type="term" value="F:RNA-DNA hybrid ribonuclease activity"/>
    <property type="evidence" value="ECO:0007669"/>
    <property type="project" value="UniProtKB-UniRule"/>
</dbReference>
<dbReference type="GO" id="GO:0043137">
    <property type="term" value="P:DNA replication, removal of RNA primer"/>
    <property type="evidence" value="ECO:0007669"/>
    <property type="project" value="TreeGrafter"/>
</dbReference>
<dbReference type="CDD" id="cd09278">
    <property type="entry name" value="RNase_HI_prokaryote_like"/>
    <property type="match status" value="1"/>
</dbReference>
<dbReference type="FunFam" id="3.30.420.10:FF:000089">
    <property type="entry name" value="Ribonuclease H"/>
    <property type="match status" value="1"/>
</dbReference>
<dbReference type="Gene3D" id="3.30.420.10">
    <property type="entry name" value="Ribonuclease H-like superfamily/Ribonuclease H"/>
    <property type="match status" value="1"/>
</dbReference>
<dbReference type="HAMAP" id="MF_00042">
    <property type="entry name" value="RNase_H"/>
    <property type="match status" value="1"/>
</dbReference>
<dbReference type="InterPro" id="IPR050092">
    <property type="entry name" value="RNase_H"/>
</dbReference>
<dbReference type="InterPro" id="IPR012337">
    <property type="entry name" value="RNaseH-like_sf"/>
</dbReference>
<dbReference type="InterPro" id="IPR002156">
    <property type="entry name" value="RNaseH_domain"/>
</dbReference>
<dbReference type="InterPro" id="IPR036397">
    <property type="entry name" value="RNaseH_sf"/>
</dbReference>
<dbReference type="InterPro" id="IPR022892">
    <property type="entry name" value="RNaseHI"/>
</dbReference>
<dbReference type="NCBIfam" id="NF001236">
    <property type="entry name" value="PRK00203.1"/>
    <property type="match status" value="1"/>
</dbReference>
<dbReference type="PANTHER" id="PTHR10642">
    <property type="entry name" value="RIBONUCLEASE H1"/>
    <property type="match status" value="1"/>
</dbReference>
<dbReference type="PANTHER" id="PTHR10642:SF26">
    <property type="entry name" value="RIBONUCLEASE H1"/>
    <property type="match status" value="1"/>
</dbReference>
<dbReference type="Pfam" id="PF00075">
    <property type="entry name" value="RNase_H"/>
    <property type="match status" value="1"/>
</dbReference>
<dbReference type="SUPFAM" id="SSF53098">
    <property type="entry name" value="Ribonuclease H-like"/>
    <property type="match status" value="1"/>
</dbReference>
<dbReference type="PROSITE" id="PS50879">
    <property type="entry name" value="RNASE_H_1"/>
    <property type="match status" value="1"/>
</dbReference>
<comment type="function">
    <text evidence="1">Endonuclease that specifically degrades the RNA of RNA-DNA hybrids.</text>
</comment>
<comment type="catalytic activity">
    <reaction evidence="1">
        <text>Endonucleolytic cleavage to 5'-phosphomonoester.</text>
        <dbReference type="EC" id="3.1.26.4"/>
    </reaction>
</comment>
<comment type="cofactor">
    <cofactor evidence="1">
        <name>Mg(2+)</name>
        <dbReference type="ChEBI" id="CHEBI:18420"/>
    </cofactor>
    <text evidence="1">Binds 1 Mg(2+) ion per subunit. May bind a second metal ion at a regulatory site, or after substrate binding.</text>
</comment>
<comment type="subunit">
    <text evidence="1">Monomer.</text>
</comment>
<comment type="subcellular location">
    <subcellularLocation>
        <location evidence="1">Cytoplasm</location>
    </subcellularLocation>
</comment>
<comment type="similarity">
    <text evidence="1">Belongs to the RNase H family.</text>
</comment>
<comment type="sequence caution" evidence="3">
    <conflict type="erroneous initiation">
        <sequence resource="EMBL-CDS" id="ABV85146"/>
    </conflict>
</comment>
<keyword id="KW-0963">Cytoplasm</keyword>
<keyword id="KW-0255">Endonuclease</keyword>
<keyword id="KW-0378">Hydrolase</keyword>
<keyword id="KW-0460">Magnesium</keyword>
<keyword id="KW-0479">Metal-binding</keyword>
<keyword id="KW-0540">Nuclease</keyword>
<organism>
    <name type="scientific">Rickettsia massiliae (strain Mtu5)</name>
    <dbReference type="NCBI Taxonomy" id="416276"/>
    <lineage>
        <taxon>Bacteria</taxon>
        <taxon>Pseudomonadati</taxon>
        <taxon>Pseudomonadota</taxon>
        <taxon>Alphaproteobacteria</taxon>
        <taxon>Rickettsiales</taxon>
        <taxon>Rickettsiaceae</taxon>
        <taxon>Rickettsieae</taxon>
        <taxon>Rickettsia</taxon>
        <taxon>spotted fever group</taxon>
    </lineage>
</organism>
<feature type="chain" id="PRO_0000332670" description="Ribonuclease H">
    <location>
        <begin position="1"/>
        <end position="152"/>
    </location>
</feature>
<feature type="domain" description="RNase H type-1" evidence="2">
    <location>
        <begin position="1"/>
        <end position="142"/>
    </location>
</feature>
<feature type="binding site" evidence="1">
    <location>
        <position position="10"/>
    </location>
    <ligand>
        <name>Mg(2+)</name>
        <dbReference type="ChEBI" id="CHEBI:18420"/>
        <label>1</label>
    </ligand>
</feature>
<feature type="binding site" evidence="1">
    <location>
        <position position="10"/>
    </location>
    <ligand>
        <name>Mg(2+)</name>
        <dbReference type="ChEBI" id="CHEBI:18420"/>
        <label>2</label>
    </ligand>
</feature>
<feature type="binding site" evidence="1">
    <location>
        <position position="48"/>
    </location>
    <ligand>
        <name>Mg(2+)</name>
        <dbReference type="ChEBI" id="CHEBI:18420"/>
        <label>1</label>
    </ligand>
</feature>
<feature type="binding site" evidence="1">
    <location>
        <position position="70"/>
    </location>
    <ligand>
        <name>Mg(2+)</name>
        <dbReference type="ChEBI" id="CHEBI:18420"/>
        <label>1</label>
    </ligand>
</feature>
<feature type="binding site" evidence="1">
    <location>
        <position position="134"/>
    </location>
    <ligand>
        <name>Mg(2+)</name>
        <dbReference type="ChEBI" id="CHEBI:18420"/>
        <label>2</label>
    </ligand>
</feature>
<gene>
    <name evidence="1" type="primary">rnhA</name>
    <name type="ordered locus">RMA_1145</name>
</gene>
<reference key="1">
    <citation type="journal article" date="2007" name="Genome Res.">
        <title>Lateral gene transfer between obligate intracellular bacteria: evidence from the Rickettsia massiliae genome.</title>
        <authorList>
            <person name="Blanc G."/>
            <person name="Ogata H."/>
            <person name="Robert C."/>
            <person name="Audic S."/>
            <person name="Claverie J.-M."/>
            <person name="Raoult D."/>
        </authorList>
    </citation>
    <scope>NUCLEOTIDE SEQUENCE [LARGE SCALE GENOMIC DNA]</scope>
    <source>
        <strain>Mtu5</strain>
    </source>
</reference>
<proteinExistence type="inferred from homology"/>
<name>RNH_RICM5</name>
<evidence type="ECO:0000255" key="1">
    <source>
        <dbReference type="HAMAP-Rule" id="MF_00042"/>
    </source>
</evidence>
<evidence type="ECO:0000255" key="2">
    <source>
        <dbReference type="PROSITE-ProRule" id="PRU00408"/>
    </source>
</evidence>
<evidence type="ECO:0000305" key="3"/>